<reference key="1">
    <citation type="journal article" date="2005" name="J. Gen. Virol.">
        <title>A new subtype (subgenotype) Ac (A3) of hepatitis B virus and recombination between genotypes A and E in Cameroon.</title>
        <authorList>
            <person name="Kurbanov F."/>
            <person name="Tanaka Y."/>
            <person name="Fujiwara K."/>
            <person name="Sugauchi F."/>
            <person name="Mbanya D."/>
            <person name="Zekeng L."/>
            <person name="Ndembi N."/>
            <person name="Ngansop C."/>
            <person name="Kaptue L."/>
            <person name="Miura T."/>
            <person name="Ido E."/>
            <person name="Hayami M."/>
            <person name="Ichimura H."/>
            <person name="Mizokami M."/>
        </authorList>
    </citation>
    <scope>NUCLEOTIDE SEQUENCE [GENOMIC DNA]</scope>
</reference>
<accession>Q4R1S8</accession>
<name>HBEAG_HBVA8</name>
<organismHost>
    <name type="scientific">Homo sapiens</name>
    <name type="common">Human</name>
    <dbReference type="NCBI Taxonomy" id="9606"/>
</organismHost>
<organismHost>
    <name type="scientific">Pan troglodytes</name>
    <name type="common">Chimpanzee</name>
    <dbReference type="NCBI Taxonomy" id="9598"/>
</organismHost>
<proteinExistence type="inferred from homology"/>
<keyword id="KW-0024">Alternative initiation</keyword>
<keyword id="KW-1015">Disulfide bond</keyword>
<keyword id="KW-1048">Host nucleus</keyword>
<keyword id="KW-0945">Host-virus interaction</keyword>
<keyword id="KW-0677">Repeat</keyword>
<keyword id="KW-0964">Secreted</keyword>
<keyword id="KW-0732">Signal</keyword>
<keyword id="KW-0899">Viral immunoevasion</keyword>
<comment type="function">
    <text evidence="2">May regulate immune response to the intracellular capsid in acting as a T-cell tolerogen, by having an immunoregulatory effect which prevents destruction of infected cells by cytotoxic T-cells. This immune regulation may predispose to chronicity during perinatal infections and prevent severe liver injury during adult infections.</text>
</comment>
<comment type="subunit">
    <text evidence="2">Homodimerizes.</text>
</comment>
<comment type="subcellular location">
    <subcellularLocation>
        <location evidence="2">Secreted</location>
    </subcellularLocation>
    <subcellularLocation>
        <location evidence="2">Host nucleus</location>
    </subcellularLocation>
</comment>
<comment type="alternative products">
    <event type="alternative initiation"/>
    <isoform>
        <id>Q4R1S8-1</id>
        <name>External core antigen</name>
        <sequence type="displayed"/>
    </isoform>
    <isoform>
        <id>P0C697-1</id>
        <name>Capsid protein</name>
        <sequence type="external"/>
    </isoform>
</comment>
<comment type="PTM">
    <text evidence="2">Phosphorylated.</text>
</comment>
<comment type="PTM">
    <text evidence="2">Cleaved by host furin.</text>
</comment>
<comment type="similarity">
    <text evidence="2">Belongs to the orthohepadnavirus precore antigen family.</text>
</comment>
<protein>
    <recommendedName>
        <fullName evidence="2">External core antigen</fullName>
    </recommendedName>
    <alternativeName>
        <fullName evidence="2">HBeAg</fullName>
    </alternativeName>
    <alternativeName>
        <fullName evidence="2">Precore protein</fullName>
    </alternativeName>
    <alternativeName>
        <fullName evidence="2">p25</fullName>
    </alternativeName>
</protein>
<organism>
    <name type="scientific">Hepatitis B virus genotype A3 (isolate Cameroon/CMR983/1994)</name>
    <name type="common">HBV-A</name>
    <dbReference type="NCBI Taxonomy" id="489458"/>
    <lineage>
        <taxon>Viruses</taxon>
        <taxon>Riboviria</taxon>
        <taxon>Pararnavirae</taxon>
        <taxon>Artverviricota</taxon>
        <taxon>Revtraviricetes</taxon>
        <taxon>Blubervirales</taxon>
        <taxon>Hepadnaviridae</taxon>
        <taxon>Orthohepadnavirus</taxon>
        <taxon>Hepatitis B virus</taxon>
    </lineage>
</organism>
<dbReference type="EMBL" id="AB194950">
    <property type="protein sequence ID" value="BAE00088.1"/>
    <property type="molecule type" value="Genomic_DNA"/>
</dbReference>
<dbReference type="SMR" id="Q4R1S8"/>
<dbReference type="Proteomes" id="UP000007911">
    <property type="component" value="Genome"/>
</dbReference>
<dbReference type="GO" id="GO:0005576">
    <property type="term" value="C:extracellular region"/>
    <property type="evidence" value="ECO:0007669"/>
    <property type="project" value="UniProtKB-SubCell"/>
</dbReference>
<dbReference type="GO" id="GO:0043657">
    <property type="term" value="C:host cell"/>
    <property type="evidence" value="ECO:0007669"/>
    <property type="project" value="GOC"/>
</dbReference>
<dbReference type="GO" id="GO:0030430">
    <property type="term" value="C:host cell cytoplasm"/>
    <property type="evidence" value="ECO:0007669"/>
    <property type="project" value="UniProtKB-UniRule"/>
</dbReference>
<dbReference type="GO" id="GO:0042025">
    <property type="term" value="C:host cell nucleus"/>
    <property type="evidence" value="ECO:0007669"/>
    <property type="project" value="UniProtKB-SubCell"/>
</dbReference>
<dbReference type="GO" id="GO:0039619">
    <property type="term" value="C:T=4 icosahedral viral capsid"/>
    <property type="evidence" value="ECO:0007669"/>
    <property type="project" value="UniProtKB-UniRule"/>
</dbReference>
<dbReference type="GO" id="GO:0003677">
    <property type="term" value="F:DNA binding"/>
    <property type="evidence" value="ECO:0007669"/>
    <property type="project" value="UniProtKB-UniRule"/>
</dbReference>
<dbReference type="GO" id="GO:0003723">
    <property type="term" value="F:RNA binding"/>
    <property type="evidence" value="ECO:0007669"/>
    <property type="project" value="UniProtKB-UniRule"/>
</dbReference>
<dbReference type="GO" id="GO:0005198">
    <property type="term" value="F:structural molecule activity"/>
    <property type="evidence" value="ECO:0007669"/>
    <property type="project" value="UniProtKB-UniRule"/>
</dbReference>
<dbReference type="GO" id="GO:0075521">
    <property type="term" value="P:microtubule-dependent intracellular transport of viral material towards nucleus"/>
    <property type="evidence" value="ECO:0007669"/>
    <property type="project" value="UniProtKB-UniRule"/>
</dbReference>
<dbReference type="GO" id="GO:0046718">
    <property type="term" value="P:symbiont entry into host cell"/>
    <property type="evidence" value="ECO:0007669"/>
    <property type="project" value="UniProtKB-UniRule"/>
</dbReference>
<dbReference type="GO" id="GO:0075732">
    <property type="term" value="P:viral penetration into host nucleus"/>
    <property type="evidence" value="ECO:0007669"/>
    <property type="project" value="UniProtKB-UniRule"/>
</dbReference>
<dbReference type="FunFam" id="1.10.4090.10:FF:000001">
    <property type="entry name" value="Capsid protein"/>
    <property type="match status" value="1"/>
</dbReference>
<dbReference type="Gene3D" id="1.10.4090.10">
    <property type="entry name" value="Viral capsid, core domain supefamily, Hepatitis B virus"/>
    <property type="match status" value="1"/>
</dbReference>
<dbReference type="HAMAP" id="MF_04076">
    <property type="entry name" value="HBV_HBEAG"/>
    <property type="match status" value="1"/>
</dbReference>
<dbReference type="InterPro" id="IPR013195">
    <property type="entry name" value="Hepatitis_B_virus_capsid_N"/>
</dbReference>
<dbReference type="InterPro" id="IPR002006">
    <property type="entry name" value="Hepatitis_core"/>
</dbReference>
<dbReference type="InterPro" id="IPR036459">
    <property type="entry name" value="Viral_capsid_core_dom_sf_HBV"/>
</dbReference>
<dbReference type="Pfam" id="PF08290">
    <property type="entry name" value="Hep_core_N"/>
    <property type="match status" value="1"/>
</dbReference>
<dbReference type="Pfam" id="PF00906">
    <property type="entry name" value="Hepatitis_core"/>
    <property type="match status" value="3"/>
</dbReference>
<dbReference type="SUPFAM" id="SSF47852">
    <property type="entry name" value="Hepatitis B viral capsid (hbcag)"/>
    <property type="match status" value="1"/>
</dbReference>
<evidence type="ECO:0000250" key="1"/>
<evidence type="ECO:0000255" key="2">
    <source>
        <dbReference type="HAMAP-Rule" id="MF_04076"/>
    </source>
</evidence>
<evidence type="ECO:0000256" key="3">
    <source>
        <dbReference type="SAM" id="MobiDB-lite"/>
    </source>
</evidence>
<sequence>MQLFHLCLIISCTCPTIQASKLCLGWLWGMDIDPYKEFGATVELLSFLPSDFFPSVRDLLDTASALYREALESPEHCSPHHTALRQAILCWGDVTNLATWVGTNLDDPASRDLVVNYVNTNMGLKIRQLLWFHISCLTFGRETVLEYLVSFGVWIRTPPAYRPPNAPILSTLPETTVVRRRDRGRSPRRRTPSPRRRRSQSPRRRRSQSRESQC</sequence>
<feature type="signal peptide" evidence="2">
    <location>
        <begin position="1"/>
        <end position="19"/>
    </location>
</feature>
<feature type="chain" id="PRO_0000324698" description="External core antigen" evidence="2">
    <location>
        <begin position="20"/>
        <end position="214"/>
    </location>
</feature>
<feature type="propeptide" id="PRO_0000324699" evidence="1">
    <location>
        <begin position="186"/>
        <end position="214"/>
    </location>
</feature>
<feature type="repeat" description="1; half-length">
    <location>
        <begin position="186"/>
        <end position="192"/>
    </location>
</feature>
<feature type="repeat" description="2">
    <location>
        <begin position="193"/>
        <end position="200"/>
    </location>
</feature>
<feature type="repeat" description="3">
    <location>
        <begin position="201"/>
        <end position="208"/>
    </location>
</feature>
<feature type="region of interest" description="HBEAG" evidence="2">
    <location>
        <begin position="25"/>
        <end position="27"/>
    </location>
</feature>
<feature type="region of interest" description="Disordered" evidence="3">
    <location>
        <begin position="165"/>
        <end position="214"/>
    </location>
</feature>
<feature type="region of interest" description="3 X 8 AA repeats of S-P-R-R-R-R-S-Q">
    <location>
        <begin position="186"/>
        <end position="208"/>
    </location>
</feature>
<feature type="compositionally biased region" description="Basic residues" evidence="3">
    <location>
        <begin position="178"/>
        <end position="207"/>
    </location>
</feature>
<feature type="site" description="Cleavage; by host" evidence="2">
    <location>
        <begin position="185"/>
        <end position="186"/>
    </location>
</feature>
<feature type="disulfide bond" description="Interchain" evidence="2">
    <location>
        <position position="77"/>
    </location>
</feature>
<feature type="disulfide bond" description="Interchain" evidence="2">
    <location>
        <position position="90"/>
    </location>
</feature>
<gene>
    <name evidence="2" type="primary">C</name>
</gene>